<feature type="transit peptide" description="Mitochondrion" evidence="3">
    <location>
        <begin position="1"/>
        <end status="unknown"/>
    </location>
</feature>
<feature type="chain" id="PRO_0000273556" description="Large ribosomal subunit protein mL46">
    <location>
        <begin status="unknown"/>
        <end position="277"/>
    </location>
</feature>
<feature type="modified residue" description="N6-succinyllysine" evidence="1">
    <location>
        <position position="217"/>
    </location>
</feature>
<feature type="modified residue" description="N6-acetyllysine" evidence="2">
    <location>
        <position position="228"/>
    </location>
</feature>
<feature type="modified residue" description="N6-succinyllysine" evidence="1">
    <location>
        <position position="246"/>
    </location>
</feature>
<sequence length="277" mass="31673">MAAPIGRTLLGVAKGWRQLDRLWAGSSRGLSLEAAPSSSRSPWRLSGALCLQRPPLITKPLTPLQEEMAGLLQQVEVERSLYSDHELRALDEAQRLAKKKADLYDEEQDQDVTLAQDLEDMWEQEFLQFRPGARETEADKKNDRTSLHRKLDRNLILLVREKLGDQDLWMLPQVEWQPGETLRGTAERILATLSENNMEAKFLGNAPCGHYKFKFPKAIRTESDLGVKVFFFKALLLTGDFVQTGKKGRHVWASKEELGDYLQPKYLAQVRRFLLDL</sequence>
<protein>
    <recommendedName>
        <fullName evidence="4">Large ribosomal subunit protein mL46</fullName>
    </recommendedName>
    <alternativeName>
        <fullName>39S ribosomal protein L46, mitochondrial</fullName>
        <shortName>L46mt</shortName>
        <shortName>MRP-L46</shortName>
    </alternativeName>
</protein>
<proteinExistence type="evidence at transcript level"/>
<keyword id="KW-0007">Acetylation</keyword>
<keyword id="KW-0496">Mitochondrion</keyword>
<keyword id="KW-1185">Reference proteome</keyword>
<keyword id="KW-0687">Ribonucleoprotein</keyword>
<keyword id="KW-0689">Ribosomal protein</keyword>
<keyword id="KW-0809">Transit peptide</keyword>
<dbReference type="EMBL" id="BC086407">
    <property type="protein sequence ID" value="AAH86407.1"/>
    <property type="molecule type" value="mRNA"/>
</dbReference>
<dbReference type="RefSeq" id="NP_001013086.1">
    <property type="nucleotide sequence ID" value="NM_001013068.1"/>
</dbReference>
<dbReference type="SMR" id="Q5RK00"/>
<dbReference type="FunCoup" id="Q5RK00">
    <property type="interactions" value="1414"/>
</dbReference>
<dbReference type="IntAct" id="Q5RK00">
    <property type="interactions" value="6"/>
</dbReference>
<dbReference type="STRING" id="10116.ENSRNOP00000061438"/>
<dbReference type="PhosphoSitePlus" id="Q5RK00"/>
<dbReference type="PaxDb" id="10116-ENSRNOP00000061438"/>
<dbReference type="Ensembl" id="ENSRNOT00000067172.3">
    <property type="protein sequence ID" value="ENSRNOP00000061438.1"/>
    <property type="gene ID" value="ENSRNOG00000018547.7"/>
</dbReference>
<dbReference type="GeneID" id="293054"/>
<dbReference type="KEGG" id="rno:293054"/>
<dbReference type="UCSC" id="RGD:1309123">
    <property type="organism name" value="rat"/>
</dbReference>
<dbReference type="AGR" id="RGD:1309123"/>
<dbReference type="CTD" id="26589"/>
<dbReference type="RGD" id="1309123">
    <property type="gene designation" value="Mrpl46"/>
</dbReference>
<dbReference type="eggNOG" id="KOG4548">
    <property type="taxonomic scope" value="Eukaryota"/>
</dbReference>
<dbReference type="GeneTree" id="ENSGT00390000015400"/>
<dbReference type="HOGENOM" id="CLU_079736_1_0_1"/>
<dbReference type="InParanoid" id="Q5RK00"/>
<dbReference type="OMA" id="EKWDLYA"/>
<dbReference type="OrthoDB" id="194611at2759"/>
<dbReference type="Reactome" id="R-RNO-5389840">
    <property type="pathway name" value="Mitochondrial translation elongation"/>
</dbReference>
<dbReference type="Reactome" id="R-RNO-5419276">
    <property type="pathway name" value="Mitochondrial translation termination"/>
</dbReference>
<dbReference type="PRO" id="PR:Q5RK00"/>
<dbReference type="Proteomes" id="UP000002494">
    <property type="component" value="Chromosome 1"/>
</dbReference>
<dbReference type="Bgee" id="ENSRNOG00000018547">
    <property type="expression patterns" value="Expressed in heart and 20 other cell types or tissues"/>
</dbReference>
<dbReference type="GO" id="GO:0005762">
    <property type="term" value="C:mitochondrial large ribosomal subunit"/>
    <property type="evidence" value="ECO:0000250"/>
    <property type="project" value="UniProtKB"/>
</dbReference>
<dbReference type="GO" id="GO:0003735">
    <property type="term" value="F:structural constituent of ribosome"/>
    <property type="evidence" value="ECO:0000318"/>
    <property type="project" value="GO_Central"/>
</dbReference>
<dbReference type="CDD" id="cd04661">
    <property type="entry name" value="NUDIX_MRP_L46"/>
    <property type="match status" value="1"/>
</dbReference>
<dbReference type="FunFam" id="3.90.79.10:FF:000018">
    <property type="entry name" value="39S ribosomal protein L46, mitochondrial"/>
    <property type="match status" value="1"/>
</dbReference>
<dbReference type="Gene3D" id="3.90.79.10">
    <property type="entry name" value="Nucleoside Triphosphate Pyrophosphohydrolase"/>
    <property type="match status" value="1"/>
</dbReference>
<dbReference type="InterPro" id="IPR015797">
    <property type="entry name" value="NUDIX_hydrolase-like_dom_sf"/>
</dbReference>
<dbReference type="InterPro" id="IPR040008">
    <property type="entry name" value="Ribosomal_mL46"/>
</dbReference>
<dbReference type="InterPro" id="IPR021757">
    <property type="entry name" value="Ribosomal_mL46_N"/>
</dbReference>
<dbReference type="InterPro" id="IPR033650">
    <property type="entry name" value="Ribosomal_mL46_NUDIX"/>
</dbReference>
<dbReference type="PANTHER" id="PTHR13124">
    <property type="entry name" value="39S RIBOSOMAL PROTEIN L46, MITOCHONDRIAL PRECURSOR-RELATED"/>
    <property type="match status" value="1"/>
</dbReference>
<dbReference type="PANTHER" id="PTHR13124:SF12">
    <property type="entry name" value="LARGE RIBOSOMAL SUBUNIT PROTEIN ML46"/>
    <property type="match status" value="1"/>
</dbReference>
<dbReference type="Pfam" id="PF11788">
    <property type="entry name" value="MRP-L46"/>
    <property type="match status" value="1"/>
</dbReference>
<dbReference type="SUPFAM" id="SSF55811">
    <property type="entry name" value="Nudix"/>
    <property type="match status" value="1"/>
</dbReference>
<accession>Q5RK00</accession>
<comment type="subunit">
    <text evidence="2">Component of the mitochondrial ribosome large subunit (39S) which comprises a 16S rRNA and about 50 distinct proteins.</text>
</comment>
<comment type="subcellular location">
    <subcellularLocation>
        <location evidence="2">Mitochondrion</location>
    </subcellularLocation>
</comment>
<comment type="similarity">
    <text evidence="4">Belongs to the mitochondrion-specific ribosomal protein mL46 family.</text>
</comment>
<gene>
    <name type="primary">Mrpl46</name>
</gene>
<reference key="1">
    <citation type="journal article" date="2004" name="Genome Res.">
        <title>The status, quality, and expansion of the NIH full-length cDNA project: the Mammalian Gene Collection (MGC).</title>
        <authorList>
            <consortium name="The MGC Project Team"/>
        </authorList>
    </citation>
    <scope>NUCLEOTIDE SEQUENCE [LARGE SCALE MRNA]</scope>
    <source>
        <tissue>Ovary</tissue>
    </source>
</reference>
<evidence type="ECO:0000250" key="1">
    <source>
        <dbReference type="UniProtKB" id="Q9EQI8"/>
    </source>
</evidence>
<evidence type="ECO:0000250" key="2">
    <source>
        <dbReference type="UniProtKB" id="Q9H2W6"/>
    </source>
</evidence>
<evidence type="ECO:0000255" key="3"/>
<evidence type="ECO:0000305" key="4"/>
<name>RM46_RAT</name>
<organism>
    <name type="scientific">Rattus norvegicus</name>
    <name type="common">Rat</name>
    <dbReference type="NCBI Taxonomy" id="10116"/>
    <lineage>
        <taxon>Eukaryota</taxon>
        <taxon>Metazoa</taxon>
        <taxon>Chordata</taxon>
        <taxon>Craniata</taxon>
        <taxon>Vertebrata</taxon>
        <taxon>Euteleostomi</taxon>
        <taxon>Mammalia</taxon>
        <taxon>Eutheria</taxon>
        <taxon>Euarchontoglires</taxon>
        <taxon>Glires</taxon>
        <taxon>Rodentia</taxon>
        <taxon>Myomorpha</taxon>
        <taxon>Muroidea</taxon>
        <taxon>Muridae</taxon>
        <taxon>Murinae</taxon>
        <taxon>Rattus</taxon>
    </lineage>
</organism>